<gene>
    <name evidence="1" type="primary">metXS</name>
    <name type="ordered locus">BAV3187</name>
</gene>
<protein>
    <recommendedName>
        <fullName evidence="1">Homoserine O-succinyltransferase</fullName>
        <shortName evidence="1">HST</shortName>
        <ecNumber evidence="1">2.3.1.46</ecNumber>
    </recommendedName>
    <alternativeName>
        <fullName evidence="1">Homoserine transsuccinylase</fullName>
        <shortName evidence="1">HTS</shortName>
    </alternativeName>
</protein>
<dbReference type="EC" id="2.3.1.46" evidence="1"/>
<dbReference type="EMBL" id="AM167904">
    <property type="protein sequence ID" value="CAJ50797.1"/>
    <property type="molecule type" value="Genomic_DNA"/>
</dbReference>
<dbReference type="RefSeq" id="WP_012418825.1">
    <property type="nucleotide sequence ID" value="NC_010645.1"/>
</dbReference>
<dbReference type="SMR" id="Q2KU63"/>
<dbReference type="STRING" id="360910.BAV3187"/>
<dbReference type="ESTHER" id="bora1-q2ku63">
    <property type="family name" value="Homoserine_transacetylase"/>
</dbReference>
<dbReference type="KEGG" id="bav:BAV3187"/>
<dbReference type="eggNOG" id="COG2021">
    <property type="taxonomic scope" value="Bacteria"/>
</dbReference>
<dbReference type="HOGENOM" id="CLU_028760_1_2_4"/>
<dbReference type="OrthoDB" id="9800754at2"/>
<dbReference type="UniPathway" id="UPA00051">
    <property type="reaction ID" value="UER00075"/>
</dbReference>
<dbReference type="Proteomes" id="UP000001977">
    <property type="component" value="Chromosome"/>
</dbReference>
<dbReference type="GO" id="GO:0005737">
    <property type="term" value="C:cytoplasm"/>
    <property type="evidence" value="ECO:0007669"/>
    <property type="project" value="UniProtKB-SubCell"/>
</dbReference>
<dbReference type="GO" id="GO:0004414">
    <property type="term" value="F:homoserine O-acetyltransferase activity"/>
    <property type="evidence" value="ECO:0007669"/>
    <property type="project" value="TreeGrafter"/>
</dbReference>
<dbReference type="GO" id="GO:0008899">
    <property type="term" value="F:homoserine O-succinyltransferase activity"/>
    <property type="evidence" value="ECO:0007669"/>
    <property type="project" value="UniProtKB-UniRule"/>
</dbReference>
<dbReference type="GO" id="GO:0009092">
    <property type="term" value="P:homoserine metabolic process"/>
    <property type="evidence" value="ECO:0007669"/>
    <property type="project" value="TreeGrafter"/>
</dbReference>
<dbReference type="GO" id="GO:0009086">
    <property type="term" value="P:methionine biosynthetic process"/>
    <property type="evidence" value="ECO:0007669"/>
    <property type="project" value="UniProtKB-UniRule"/>
</dbReference>
<dbReference type="FunFam" id="1.10.1740.110:FF:000001">
    <property type="entry name" value="Homoserine O-acetyltransferase"/>
    <property type="match status" value="1"/>
</dbReference>
<dbReference type="Gene3D" id="1.10.1740.110">
    <property type="match status" value="1"/>
</dbReference>
<dbReference type="Gene3D" id="3.40.50.1820">
    <property type="entry name" value="alpha/beta hydrolase"/>
    <property type="match status" value="1"/>
</dbReference>
<dbReference type="HAMAP" id="MF_00296">
    <property type="entry name" value="MetX_acyltransf"/>
    <property type="match status" value="1"/>
</dbReference>
<dbReference type="InterPro" id="IPR000073">
    <property type="entry name" value="AB_hydrolase_1"/>
</dbReference>
<dbReference type="InterPro" id="IPR029058">
    <property type="entry name" value="AB_hydrolase_fold"/>
</dbReference>
<dbReference type="InterPro" id="IPR008220">
    <property type="entry name" value="HAT_MetX-like"/>
</dbReference>
<dbReference type="NCBIfam" id="TIGR01392">
    <property type="entry name" value="homoserO_Ac_trn"/>
    <property type="match status" value="1"/>
</dbReference>
<dbReference type="NCBIfam" id="NF001209">
    <property type="entry name" value="PRK00175.1"/>
    <property type="match status" value="1"/>
</dbReference>
<dbReference type="PANTHER" id="PTHR32268">
    <property type="entry name" value="HOMOSERINE O-ACETYLTRANSFERASE"/>
    <property type="match status" value="1"/>
</dbReference>
<dbReference type="PANTHER" id="PTHR32268:SF11">
    <property type="entry name" value="HOMOSERINE O-ACETYLTRANSFERASE"/>
    <property type="match status" value="1"/>
</dbReference>
<dbReference type="Pfam" id="PF00561">
    <property type="entry name" value="Abhydrolase_1"/>
    <property type="match status" value="1"/>
</dbReference>
<dbReference type="PIRSF" id="PIRSF000443">
    <property type="entry name" value="Homoser_Ac_trans"/>
    <property type="match status" value="1"/>
</dbReference>
<dbReference type="SUPFAM" id="SSF53474">
    <property type="entry name" value="alpha/beta-Hydrolases"/>
    <property type="match status" value="1"/>
</dbReference>
<keyword id="KW-0012">Acyltransferase</keyword>
<keyword id="KW-0028">Amino-acid biosynthesis</keyword>
<keyword id="KW-0963">Cytoplasm</keyword>
<keyword id="KW-0486">Methionine biosynthesis</keyword>
<keyword id="KW-1185">Reference proteome</keyword>
<keyword id="KW-0808">Transferase</keyword>
<proteinExistence type="inferred from homology"/>
<evidence type="ECO:0000255" key="1">
    <source>
        <dbReference type="HAMAP-Rule" id="MF_00296"/>
    </source>
</evidence>
<evidence type="ECO:0000256" key="2">
    <source>
        <dbReference type="SAM" id="MobiDB-lite"/>
    </source>
</evidence>
<name>METXS_BORA1</name>
<accession>Q2KU63</accession>
<feature type="chain" id="PRO_1000021866" description="Homoserine O-succinyltransferase">
    <location>
        <begin position="1"/>
        <end position="415"/>
    </location>
</feature>
<feature type="domain" description="AB hydrolase-1" evidence="1">
    <location>
        <begin position="71"/>
        <end position="386"/>
    </location>
</feature>
<feature type="region of interest" description="Disordered" evidence="2">
    <location>
        <begin position="1"/>
        <end position="27"/>
    </location>
</feature>
<feature type="compositionally biased region" description="Polar residues" evidence="2">
    <location>
        <begin position="1"/>
        <end position="26"/>
    </location>
</feature>
<feature type="active site" description="Nucleophile" evidence="1">
    <location>
        <position position="177"/>
    </location>
</feature>
<feature type="active site" evidence="1">
    <location>
        <position position="346"/>
    </location>
</feature>
<feature type="active site" evidence="1">
    <location>
        <position position="379"/>
    </location>
</feature>
<feature type="binding site" evidence="1">
    <location>
        <position position="247"/>
    </location>
    <ligand>
        <name>substrate</name>
    </ligand>
</feature>
<feature type="binding site" evidence="1">
    <location>
        <position position="380"/>
    </location>
    <ligand>
        <name>substrate</name>
    </ligand>
</feature>
<feature type="site" description="Important for acyl-CoA specificity" evidence="1">
    <location>
        <position position="348"/>
    </location>
</feature>
<sequence>MTSPALTAASVTPSRNTTSPDTTSHRPASVGVVSPVFLRFDEPLPLASGQSLNAYELAVETYGTLNAERSNAVLICHALNASHHVAGVAAGNPKDVGWWDNMVGPGKPVDTDVFFVIGINNLGSCFGSTGPASTNPETGLPWGAAFPVLTVEDWVRAQARVADHFGIQRFAAVMGGSLGGMQALSWAITLPERVAHCVVIASTPRLSAQNIGFNEVARRAIITDPGFHGGNYYAHDTVPHRGLAVARMIGHITYLSDDDMAEKFGRTQREPAENGAYRYGYDVEFEVESYLRYQGEKFSRYFDANTYLLITRALDYFDPARATGGDLARALSSAQADFLLVSFTTDWRFPPERSRDIVRALLKNGSPVTYAEIDAPHGHDAFLLEDARYHAVVSAYYERIARNLGLTRQAEESAA</sequence>
<reference key="1">
    <citation type="journal article" date="2006" name="J. Bacteriol.">
        <title>Comparison of the genome sequence of the poultry pathogen Bordetella avium with those of B. bronchiseptica, B. pertussis, and B. parapertussis reveals extensive diversity in surface structures associated with host interaction.</title>
        <authorList>
            <person name="Sebaihia M."/>
            <person name="Preston A."/>
            <person name="Maskell D.J."/>
            <person name="Kuzmiak H."/>
            <person name="Connell T.D."/>
            <person name="King N.D."/>
            <person name="Orndorff P.E."/>
            <person name="Miyamoto D.M."/>
            <person name="Thomson N.R."/>
            <person name="Harris D."/>
            <person name="Goble A."/>
            <person name="Lord A."/>
            <person name="Murphy L."/>
            <person name="Quail M.A."/>
            <person name="Rutter S."/>
            <person name="Squares R."/>
            <person name="Squares S."/>
            <person name="Woodward J."/>
            <person name="Parkhill J."/>
            <person name="Temple L.M."/>
        </authorList>
    </citation>
    <scope>NUCLEOTIDE SEQUENCE [LARGE SCALE GENOMIC DNA]</scope>
    <source>
        <strain>197N</strain>
    </source>
</reference>
<comment type="function">
    <text evidence="1">Transfers a succinyl group from succinyl-CoA to L-homoserine, forming succinyl-L-homoserine.</text>
</comment>
<comment type="catalytic activity">
    <reaction evidence="1">
        <text>L-homoserine + succinyl-CoA = O-succinyl-L-homoserine + CoA</text>
        <dbReference type="Rhea" id="RHEA:22008"/>
        <dbReference type="ChEBI" id="CHEBI:57287"/>
        <dbReference type="ChEBI" id="CHEBI:57292"/>
        <dbReference type="ChEBI" id="CHEBI:57476"/>
        <dbReference type="ChEBI" id="CHEBI:57661"/>
        <dbReference type="EC" id="2.3.1.46"/>
    </reaction>
</comment>
<comment type="pathway">
    <text evidence="1">Amino-acid biosynthesis; L-methionine biosynthesis via de novo pathway; O-succinyl-L-homoserine from L-homoserine: step 1/1.</text>
</comment>
<comment type="subunit">
    <text evidence="1">Homodimer.</text>
</comment>
<comment type="subcellular location">
    <subcellularLocation>
        <location evidence="1">Cytoplasm</location>
    </subcellularLocation>
</comment>
<comment type="similarity">
    <text evidence="1">Belongs to the AB hydrolase superfamily. MetX family.</text>
</comment>
<organism>
    <name type="scientific">Bordetella avium (strain 197N)</name>
    <dbReference type="NCBI Taxonomy" id="360910"/>
    <lineage>
        <taxon>Bacteria</taxon>
        <taxon>Pseudomonadati</taxon>
        <taxon>Pseudomonadota</taxon>
        <taxon>Betaproteobacteria</taxon>
        <taxon>Burkholderiales</taxon>
        <taxon>Alcaligenaceae</taxon>
        <taxon>Bordetella</taxon>
    </lineage>
</organism>